<sequence>MELGVPLPRRPVPGSYGVPFVSAVRDRLDFYYLQGQDKYFESRAERYGSTVVRINVPPGPFMARDPRVVALLDAKSFPVLFDVAKVEKRDVFTGTFMPSTSLTGGYRVCAYLDPSEPNHAKIKQLLLSLLVSRKDAFVPVFRSNFGALLDTVESQLASGGGKSDFTALNDATSFEFIGEAYFGVRPSASSSLGTGGPTKAALWLLWQLAPLTTLGLPMIIEDPLLHTLPLPPFLISSDYKALYAYFAAAASQALDAAEGLGLSREEACHNLLFATVFNSYGGFKLLLPQILSRVAQAGEKLHERLAAEIRSAVADAGGNVTLAALEKMELTRSVVWEALRLDPPVRFQYGRAKADLEIESHDASFAIKKGEMLFGYQPCATRDPRVFGATAREFVGDRFVGEEGRKLLQYVYWSNGRETENPSVDNKQCPGKNLVVLVGRLLLVELFLRYDTFTAEAGKKVVITGVTKASTSAVNRTA</sequence>
<protein>
    <recommendedName>
        <fullName>Allene oxide synthase 2</fullName>
        <ecNumber evidence="2">4.2.1.92</ecNumber>
    </recommendedName>
    <alternativeName>
        <fullName>Cytochrome P450 74A2</fullName>
    </alternativeName>
    <alternativeName>
        <fullName>Hydroperoxide dehydratase 2</fullName>
    </alternativeName>
</protein>
<feature type="chain" id="PRO_0000052125" description="Allene oxide synthase 2">
    <location>
        <begin position="1"/>
        <end position="478"/>
    </location>
</feature>
<feature type="binding site" evidence="1">
    <location>
        <position position="88"/>
    </location>
    <ligand>
        <name>heme b</name>
        <dbReference type="ChEBI" id="CHEBI:60344"/>
    </ligand>
</feature>
<feature type="binding site" evidence="1">
    <location>
        <position position="119"/>
    </location>
    <ligand>
        <name>heme b</name>
        <dbReference type="ChEBI" id="CHEBI:60344"/>
    </ligand>
</feature>
<feature type="binding site" evidence="1">
    <location>
        <position position="123"/>
    </location>
    <ligand>
        <name>heme b</name>
        <dbReference type="ChEBI" id="CHEBI:60344"/>
    </ligand>
</feature>
<feature type="binding site" evidence="1">
    <location>
        <position position="278"/>
    </location>
    <ligand>
        <name>(13S)-hydroperoxy-(9Z,11E,15Z)-octadecatrienoate</name>
        <dbReference type="ChEBI" id="CHEBI:58757"/>
    </ligand>
</feature>
<feature type="binding site" evidence="1">
    <location>
        <position position="427"/>
    </location>
    <ligand>
        <name>heme b</name>
        <dbReference type="ChEBI" id="CHEBI:60344"/>
    </ligand>
</feature>
<feature type="binding site" description="axial binding residue" evidence="1">
    <location>
        <position position="429"/>
    </location>
    <ligand>
        <name>heme b</name>
        <dbReference type="ChEBI" id="CHEBI:60344"/>
    </ligand>
    <ligandPart>
        <name>Fe</name>
        <dbReference type="ChEBI" id="CHEBI:18248"/>
    </ligandPart>
</feature>
<feature type="sequence conflict" description="In Ref. 3; AAP75620." evidence="5" ref="3">
    <original>D</original>
    <variation>E</variation>
    <location>
        <position position="65"/>
    </location>
</feature>
<feature type="sequence conflict" description="In Ref. 1; AAL17675." evidence="5" ref="1">
    <original>E</original>
    <variation>Q</variation>
    <location>
        <position position="153"/>
    </location>
</feature>
<feature type="sequence conflict" description="In Ref. 1; AAL17675." evidence="5" ref="1">
    <original>E</original>
    <variation>K</variation>
    <location>
        <position position="179"/>
    </location>
</feature>
<feature type="sequence conflict" description="In Ref. 1; AAL17675." evidence="5" ref="1">
    <original>PTKAA</original>
    <variation>LDQGR</variation>
    <location>
        <begin position="197"/>
        <end position="201"/>
    </location>
</feature>
<feature type="sequence conflict" description="In Ref. 3; AAP75620." evidence="5" ref="3">
    <original>R</original>
    <variation>T</variation>
    <location>
        <position position="332"/>
    </location>
</feature>
<organism>
    <name type="scientific">Oryza sativa subsp. japonica</name>
    <name type="common">Rice</name>
    <dbReference type="NCBI Taxonomy" id="39947"/>
    <lineage>
        <taxon>Eukaryota</taxon>
        <taxon>Viridiplantae</taxon>
        <taxon>Streptophyta</taxon>
        <taxon>Embryophyta</taxon>
        <taxon>Tracheophyta</taxon>
        <taxon>Spermatophyta</taxon>
        <taxon>Magnoliopsida</taxon>
        <taxon>Liliopsida</taxon>
        <taxon>Poales</taxon>
        <taxon>Poaceae</taxon>
        <taxon>BOP clade</taxon>
        <taxon>Oryzoideae</taxon>
        <taxon>Oryzeae</taxon>
        <taxon>Oryzinae</taxon>
        <taxon>Oryza</taxon>
        <taxon>Oryza sativa</taxon>
    </lineage>
</organism>
<reference key="1">
    <citation type="journal article" date="2002" name="Biosci. Biotechnol. Biochem.">
        <title>Molecular characterization of the gene encoding rice allene oxide synthase and its expression.</title>
        <authorList>
            <person name="Ha S.-B."/>
            <person name="Lee B.-C."/>
            <person name="Lee D.-E."/>
            <person name="Kuk Y.I."/>
            <person name="Lee A.-Y."/>
            <person name="Han O."/>
            <person name="Back K."/>
        </authorList>
    </citation>
    <scope>NUCLEOTIDE SEQUENCE [MRNA]</scope>
    <scope>FUNCTION</scope>
    <scope>CATALYTIC ACTIVITY</scope>
    <scope>TISSUE SPECIFICITY</scope>
    <scope>INDUCTION</scope>
</reference>
<reference key="2">
    <citation type="journal article" date="2002" name="Plant Physiol. Biochem.">
        <title>Molecular cloning and mRNA expression analysis of the first rice jasmonate biosynthetic pathway gene allene oxide synthase.</title>
        <authorList>
            <person name="Agrawal G.K."/>
            <person name="Rakwal R."/>
            <person name="Jwa N.-S."/>
            <person name="Han K.-S."/>
            <person name="Agrawal V.P."/>
        </authorList>
    </citation>
    <scope>NUCLEOTIDE SEQUENCE [GENOMIC DNA]</scope>
    <scope>TISSUE SPECIFICITY</scope>
    <scope>INDUCTION</scope>
    <source>
        <strain>cv. Nipponbare</strain>
        <tissue>Seedling leaf</tissue>
    </source>
</reference>
<reference key="3">
    <citation type="submission" date="2003-05" db="EMBL/GenBank/DDBJ databases">
        <title>Characterization of rice allene oxide synthase gene.</title>
        <authorList>
            <person name="Mei C."/>
            <person name="Qi M."/>
            <person name="Yang Y."/>
        </authorList>
    </citation>
    <scope>NUCLEOTIDE SEQUENCE [MRNA]</scope>
    <source>
        <strain>cv. Nipponbare</strain>
    </source>
</reference>
<reference key="4">
    <citation type="journal article" date="2005" name="Genome Res.">
        <title>Sequence, annotation, and analysis of synteny between rice chromosome 3 and diverged grass species.</title>
        <authorList>
            <consortium name="The rice chromosome 3 sequencing consortium"/>
            <person name="Buell C.R."/>
            <person name="Yuan Q."/>
            <person name="Ouyang S."/>
            <person name="Liu J."/>
            <person name="Zhu W."/>
            <person name="Wang A."/>
            <person name="Maiti R."/>
            <person name="Haas B."/>
            <person name="Wortman J."/>
            <person name="Pertea M."/>
            <person name="Jones K.M."/>
            <person name="Kim M."/>
            <person name="Overton L."/>
            <person name="Tsitrin T."/>
            <person name="Fadrosh D."/>
            <person name="Bera J."/>
            <person name="Weaver B."/>
            <person name="Jin S."/>
            <person name="Johri S."/>
            <person name="Reardon M."/>
            <person name="Webb K."/>
            <person name="Hill J."/>
            <person name="Moffat K."/>
            <person name="Tallon L."/>
            <person name="Van Aken S."/>
            <person name="Lewis M."/>
            <person name="Utterback T."/>
            <person name="Feldblyum T."/>
            <person name="Zismann V."/>
            <person name="Iobst S."/>
            <person name="Hsiao J."/>
            <person name="de Vazeille A.R."/>
            <person name="Salzberg S.L."/>
            <person name="White O."/>
            <person name="Fraser C.M."/>
            <person name="Yu Y."/>
            <person name="Kim H."/>
            <person name="Rambo T."/>
            <person name="Currie J."/>
            <person name="Collura K."/>
            <person name="Kernodle-Thompson S."/>
            <person name="Wei F."/>
            <person name="Kudrna K."/>
            <person name="Ammiraju J.S.S."/>
            <person name="Luo M."/>
            <person name="Goicoechea J.L."/>
            <person name="Wing R.A."/>
            <person name="Henry D."/>
            <person name="Oates R."/>
            <person name="Palmer M."/>
            <person name="Pries G."/>
            <person name="Saski C."/>
            <person name="Simmons J."/>
            <person name="Soderlund C."/>
            <person name="Nelson W."/>
            <person name="de la Bastide M."/>
            <person name="Spiegel L."/>
            <person name="Nascimento L."/>
            <person name="Huang E."/>
            <person name="Preston R."/>
            <person name="Zutavern T."/>
            <person name="Palmer L."/>
            <person name="O'Shaughnessy A."/>
            <person name="Dike S."/>
            <person name="McCombie W.R."/>
            <person name="Minx P."/>
            <person name="Cordum H."/>
            <person name="Wilson R."/>
            <person name="Jin W."/>
            <person name="Lee H.R."/>
            <person name="Jiang J."/>
            <person name="Jackson S."/>
        </authorList>
    </citation>
    <scope>NUCLEOTIDE SEQUENCE [LARGE SCALE GENOMIC DNA]</scope>
    <source>
        <strain>cv. Nipponbare</strain>
    </source>
</reference>
<reference key="5">
    <citation type="journal article" date="2005" name="Nature">
        <title>The map-based sequence of the rice genome.</title>
        <authorList>
            <consortium name="International rice genome sequencing project (IRGSP)"/>
        </authorList>
    </citation>
    <scope>NUCLEOTIDE SEQUENCE [LARGE SCALE GENOMIC DNA]</scope>
    <source>
        <strain>cv. Nipponbare</strain>
    </source>
</reference>
<reference key="6">
    <citation type="journal article" date="2008" name="Nucleic Acids Res.">
        <title>The rice annotation project database (RAP-DB): 2008 update.</title>
        <authorList>
            <consortium name="The rice annotation project (RAP)"/>
        </authorList>
    </citation>
    <scope>GENOME REANNOTATION</scope>
    <source>
        <strain>cv. Nipponbare</strain>
    </source>
</reference>
<reference key="7">
    <citation type="journal article" date="2013" name="Rice">
        <title>Improvement of the Oryza sativa Nipponbare reference genome using next generation sequence and optical map data.</title>
        <authorList>
            <person name="Kawahara Y."/>
            <person name="de la Bastide M."/>
            <person name="Hamilton J.P."/>
            <person name="Kanamori H."/>
            <person name="McCombie W.R."/>
            <person name="Ouyang S."/>
            <person name="Schwartz D.C."/>
            <person name="Tanaka T."/>
            <person name="Wu J."/>
            <person name="Zhou S."/>
            <person name="Childs K.L."/>
            <person name="Davidson R.M."/>
            <person name="Lin H."/>
            <person name="Quesada-Ocampo L."/>
            <person name="Vaillancourt B."/>
            <person name="Sakai H."/>
            <person name="Lee S.S."/>
            <person name="Kim J."/>
            <person name="Numa H."/>
            <person name="Itoh T."/>
            <person name="Buell C.R."/>
            <person name="Matsumoto T."/>
        </authorList>
    </citation>
    <scope>GENOME REANNOTATION</scope>
    <source>
        <strain>cv. Nipponbare</strain>
    </source>
</reference>
<reference key="8">
    <citation type="journal article" date="2003" name="Science">
        <title>Collection, mapping, and annotation of over 28,000 cDNA clones from japonica rice.</title>
        <authorList>
            <consortium name="The rice full-length cDNA consortium"/>
        </authorList>
    </citation>
    <scope>NUCLEOTIDE SEQUENCE [LARGE SCALE MRNA]</scope>
    <source>
        <strain>cv. Nipponbare</strain>
    </source>
</reference>
<reference key="9">
    <citation type="journal article" date="2004" name="Plant Cell Physiol.">
        <title>Phytochrome-mediated transcriptional up-regulation of ALLENE OXIDE SYNTHASE in rice seedlings.</title>
        <authorList>
            <person name="Haga K."/>
            <person name="Iino M."/>
        </authorList>
    </citation>
    <scope>TISSUE SPECIFICITY</scope>
    <scope>INDUCTION</scope>
    <scope>NOMENCLATURE</scope>
</reference>
<accession>Q7XYS3</accession>
<accession>Q10PQ1</accession>
<accession>Q8H7R3</accession>
<accession>Q8VZX5</accession>
<accession>Q940D7</accession>
<proteinExistence type="evidence at protein level"/>
<evidence type="ECO:0000250" key="1">
    <source>
        <dbReference type="UniProtKB" id="Q96242"/>
    </source>
</evidence>
<evidence type="ECO:0000269" key="2">
    <source>
    </source>
</evidence>
<evidence type="ECO:0000269" key="3">
    <source>
    </source>
</evidence>
<evidence type="ECO:0000269" key="4">
    <source ref="2"/>
</evidence>
<evidence type="ECO:0000305" key="5"/>
<evidence type="ECO:0000305" key="6">
    <source>
    </source>
</evidence>
<gene>
    <name type="primary">CYP74A2</name>
    <name type="synonym">AOS2</name>
    <name type="ordered locus">Os03g0225900</name>
    <name type="ordered locus">LOC_Os03g12500</name>
    <name type="ORF">OSJNBa0081P02.18</name>
</gene>
<comment type="function">
    <text evidence="2">Involved in the biosynthesis of jasmonic acid, a growth regulator that is implicated also as a signaling molecule in plant defense. Converts 13-hydroperoxylinolenic acid to 12,13-epoxylinolenic acid.</text>
</comment>
<comment type="catalytic activity">
    <reaction evidence="2">
        <text>(13S)-hydroperoxy-(9Z,11E,15Z)-octadecatrienoate = (9Z,13S,15Z)-12,13-epoxyoctadeca-9,11,15-trienoate + H2O</text>
        <dbReference type="Rhea" id="RHEA:25074"/>
        <dbReference type="ChEBI" id="CHEBI:15377"/>
        <dbReference type="ChEBI" id="CHEBI:36438"/>
        <dbReference type="ChEBI" id="CHEBI:58757"/>
        <dbReference type="EC" id="4.2.1.92"/>
    </reaction>
    <physiologicalReaction direction="left-to-right" evidence="6">
        <dbReference type="Rhea" id="RHEA:25075"/>
    </physiologicalReaction>
</comment>
<comment type="cofactor">
    <cofactor evidence="1">
        <name>heme b</name>
        <dbReference type="ChEBI" id="CHEBI:60344"/>
    </cofactor>
</comment>
<comment type="pathway">
    <text>Lipid metabolism; oxylipin biosynthesis.</text>
</comment>
<comment type="tissue specificity">
    <text evidence="2 3 4">Weakly expressed in roots, shoots, leaves and flowers.</text>
</comment>
<comment type="induction">
    <text evidence="2 3 4">By jasmonic acid, salicylic acid, hydrogen peroxide, copper and by the protein phosphatases cantharidin, endothall and okadaic acid in light-grown seedling leaves. By incompatible rice blast fungus M.grisea. Not induced by red (R) light or abrasion in dark-grown seedlings.</text>
</comment>
<comment type="similarity">
    <text evidence="5">Belongs to the cytochrome P450 family.</text>
</comment>
<name>C74A2_ORYSJ</name>
<dbReference type="EC" id="4.2.1.92" evidence="2"/>
<dbReference type="EMBL" id="AY055775">
    <property type="protein sequence ID" value="AAL17675.1"/>
    <property type="molecule type" value="mRNA"/>
</dbReference>
<dbReference type="EMBL" id="AY062258">
    <property type="protein sequence ID" value="AAL38184.1"/>
    <property type="molecule type" value="Genomic_DNA"/>
</dbReference>
<dbReference type="EMBL" id="AY310358">
    <property type="protein sequence ID" value="AAP75620.1"/>
    <property type="molecule type" value="mRNA"/>
</dbReference>
<dbReference type="EMBL" id="AC107226">
    <property type="protein sequence ID" value="AAN52753.1"/>
    <property type="molecule type" value="Genomic_DNA"/>
</dbReference>
<dbReference type="EMBL" id="DP000009">
    <property type="protein sequence ID" value="ABF94742.1"/>
    <property type="molecule type" value="Genomic_DNA"/>
</dbReference>
<dbReference type="EMBL" id="AP008209">
    <property type="protein sequence ID" value="BAF11350.1"/>
    <property type="molecule type" value="Genomic_DNA"/>
</dbReference>
<dbReference type="EMBL" id="AP014959">
    <property type="protein sequence ID" value="BAS83058.1"/>
    <property type="molecule type" value="Genomic_DNA"/>
</dbReference>
<dbReference type="EMBL" id="AK061758">
    <property type="protein sequence ID" value="BAG88095.1"/>
    <property type="molecule type" value="mRNA"/>
</dbReference>
<dbReference type="RefSeq" id="XP_015628763.1">
    <property type="nucleotide sequence ID" value="XM_015773277.1"/>
</dbReference>
<dbReference type="SMR" id="Q7XYS3"/>
<dbReference type="FunCoup" id="Q7XYS3">
    <property type="interactions" value="21"/>
</dbReference>
<dbReference type="STRING" id="39947.Q7XYS3"/>
<dbReference type="PaxDb" id="39947-Q7XYS3"/>
<dbReference type="EnsemblPlants" id="Os03t0225900-01">
    <property type="protein sequence ID" value="Os03t0225900-01"/>
    <property type="gene ID" value="Os03g0225900"/>
</dbReference>
<dbReference type="EnsemblPlants" id="Os03t0225900-02">
    <property type="protein sequence ID" value="Os03t0225900-02"/>
    <property type="gene ID" value="Os03g0225900"/>
</dbReference>
<dbReference type="Gramene" id="Os03t0225900-01">
    <property type="protein sequence ID" value="Os03t0225900-01"/>
    <property type="gene ID" value="Os03g0225900"/>
</dbReference>
<dbReference type="Gramene" id="Os03t0225900-02">
    <property type="protein sequence ID" value="Os03t0225900-02"/>
    <property type="gene ID" value="Os03g0225900"/>
</dbReference>
<dbReference type="KEGG" id="dosa:Os03g0225900"/>
<dbReference type="eggNOG" id="ENOG502QQNS">
    <property type="taxonomic scope" value="Eukaryota"/>
</dbReference>
<dbReference type="HOGENOM" id="CLU_045757_0_0_1"/>
<dbReference type="InParanoid" id="Q7XYS3"/>
<dbReference type="OMA" id="VANKQCP"/>
<dbReference type="OrthoDB" id="2789670at2759"/>
<dbReference type="PlantReactome" id="R-OSA-1119332">
    <property type="pathway name" value="Jasmonic acid biosynthesis"/>
</dbReference>
<dbReference type="UniPathway" id="UPA00382"/>
<dbReference type="Proteomes" id="UP000000763">
    <property type="component" value="Chromosome 3"/>
</dbReference>
<dbReference type="Proteomes" id="UP000059680">
    <property type="component" value="Chromosome 3"/>
</dbReference>
<dbReference type="GO" id="GO:0009978">
    <property type="term" value="F:allene oxide synthase activity"/>
    <property type="evidence" value="ECO:0007669"/>
    <property type="project" value="UniProtKB-EC"/>
</dbReference>
<dbReference type="GO" id="GO:0020037">
    <property type="term" value="F:heme binding"/>
    <property type="evidence" value="ECO:0007669"/>
    <property type="project" value="InterPro"/>
</dbReference>
<dbReference type="GO" id="GO:0005506">
    <property type="term" value="F:iron ion binding"/>
    <property type="evidence" value="ECO:0007669"/>
    <property type="project" value="InterPro"/>
</dbReference>
<dbReference type="GO" id="GO:0004497">
    <property type="term" value="F:monooxygenase activity"/>
    <property type="evidence" value="ECO:0000318"/>
    <property type="project" value="GO_Central"/>
</dbReference>
<dbReference type="GO" id="GO:0016705">
    <property type="term" value="F:oxidoreductase activity, acting on paired donors, with incorporation or reduction of molecular oxygen"/>
    <property type="evidence" value="ECO:0007669"/>
    <property type="project" value="InterPro"/>
</dbReference>
<dbReference type="GO" id="GO:0006633">
    <property type="term" value="P:fatty acid biosynthetic process"/>
    <property type="evidence" value="ECO:0007669"/>
    <property type="project" value="UniProtKB-KW"/>
</dbReference>
<dbReference type="GO" id="GO:0031408">
    <property type="term" value="P:oxylipin biosynthetic process"/>
    <property type="evidence" value="ECO:0007669"/>
    <property type="project" value="UniProtKB-UniPathway"/>
</dbReference>
<dbReference type="CDD" id="cd11071">
    <property type="entry name" value="CYP74"/>
    <property type="match status" value="1"/>
</dbReference>
<dbReference type="FunFam" id="1.10.630.10:FF:000024">
    <property type="entry name" value="Allene oxide synthase, chloroplastic"/>
    <property type="match status" value="1"/>
</dbReference>
<dbReference type="Gene3D" id="1.10.630.10">
    <property type="entry name" value="Cytochrome P450"/>
    <property type="match status" value="1"/>
</dbReference>
<dbReference type="InterPro" id="IPR001128">
    <property type="entry name" value="Cyt_P450"/>
</dbReference>
<dbReference type="InterPro" id="IPR036396">
    <property type="entry name" value="Cyt_P450_sf"/>
</dbReference>
<dbReference type="PANTHER" id="PTHR24286:SF302">
    <property type="entry name" value="ALLENE OXIDE SYNTHASE 2"/>
    <property type="match status" value="1"/>
</dbReference>
<dbReference type="PANTHER" id="PTHR24286">
    <property type="entry name" value="CYTOCHROME P450 26"/>
    <property type="match status" value="1"/>
</dbReference>
<dbReference type="Pfam" id="PF00067">
    <property type="entry name" value="p450"/>
    <property type="match status" value="1"/>
</dbReference>
<dbReference type="SUPFAM" id="SSF48264">
    <property type="entry name" value="Cytochrome P450"/>
    <property type="match status" value="1"/>
</dbReference>
<keyword id="KW-0275">Fatty acid biosynthesis</keyword>
<keyword id="KW-0276">Fatty acid metabolism</keyword>
<keyword id="KW-0349">Heme</keyword>
<keyword id="KW-0408">Iron</keyword>
<keyword id="KW-0444">Lipid biosynthesis</keyword>
<keyword id="KW-0443">Lipid metabolism</keyword>
<keyword id="KW-0456">Lyase</keyword>
<keyword id="KW-0479">Metal-binding</keyword>
<keyword id="KW-0925">Oxylipin biosynthesis</keyword>
<keyword id="KW-1185">Reference proteome</keyword>